<keyword id="KW-0067">ATP-binding</keyword>
<keyword id="KW-0143">Chaperone</keyword>
<keyword id="KW-0963">Cytoplasm</keyword>
<keyword id="KW-0413">Isomerase</keyword>
<keyword id="KW-0547">Nucleotide-binding</keyword>
<sequence>MSAKDVKFGDSARSKMIAGVNVLADAVKVTLGPKGRNVVIDRSFGAPHITKDGVTVAKEISLKDKFENMGAQLVREVSSKTNDIAGDGTTTATVLAQAILNEGIKSVTAGMNPMDLKRGIDIAVKTVVENIRSIAKPADDFKAIEQVGSISANSDTTVGKLIAQAMEKVGKEGVITVEEGSGFEDALDVVEGMQFDRGYISPYFANKQDTLTAELENPFILLVDKKISNIRELISVLEAVAKTGKPLLIIAEDVEGEALATLVVNNMRGIIKVCAVKAPGFGDRRKAMLQDIAILTGATVISEEVGMSLEQATLQDLGTAHKITVSKENTVIVDGAGDAAAIAERVQQIRAQIEESTSEYDREKLQERVAKLAGGVAVIKIGAATEVEMKEKKDRVDDALHATRAAVEEGVVAGGGVALVRAVNALEGLKGANEDQTAGINILRRAIEAPLRQIVANAGDEPSVVINAVKNGEGNFGYNAATGEYGDMLEMGILDPAKVTRSALEHAASVAGLMLTTECMITDIPEDKPAAPDMGGMGGMGGMM</sequence>
<proteinExistence type="inferred from homology"/>
<accession>B7GY36</accession>
<organism>
    <name type="scientific">Acinetobacter baumannii (strain AB307-0294)</name>
    <dbReference type="NCBI Taxonomy" id="557600"/>
    <lineage>
        <taxon>Bacteria</taxon>
        <taxon>Pseudomonadati</taxon>
        <taxon>Pseudomonadota</taxon>
        <taxon>Gammaproteobacteria</taxon>
        <taxon>Moraxellales</taxon>
        <taxon>Moraxellaceae</taxon>
        <taxon>Acinetobacter</taxon>
        <taxon>Acinetobacter calcoaceticus/baumannii complex</taxon>
    </lineage>
</organism>
<gene>
    <name evidence="1" type="primary">groEL</name>
    <name evidence="1" type="synonym">groL</name>
    <name type="ordered locus">ABBFA_000812</name>
</gene>
<reference key="1">
    <citation type="journal article" date="2008" name="J. Bacteriol.">
        <title>Comparative genome sequence analysis of multidrug-resistant Acinetobacter baumannii.</title>
        <authorList>
            <person name="Adams M.D."/>
            <person name="Goglin K."/>
            <person name="Molyneaux N."/>
            <person name="Hujer K.M."/>
            <person name="Lavender H."/>
            <person name="Jamison J.J."/>
            <person name="MacDonald I.J."/>
            <person name="Martin K.M."/>
            <person name="Russo T."/>
            <person name="Campagnari A.A."/>
            <person name="Hujer A.M."/>
            <person name="Bonomo R.A."/>
            <person name="Gill S.R."/>
        </authorList>
    </citation>
    <scope>NUCLEOTIDE SEQUENCE [LARGE SCALE GENOMIC DNA]</scope>
    <source>
        <strain>AB307-0294</strain>
    </source>
</reference>
<comment type="function">
    <text evidence="1">Together with its co-chaperonin GroES, plays an essential role in assisting protein folding. The GroEL-GroES system forms a nano-cage that allows encapsulation of the non-native substrate proteins and provides a physical environment optimized to promote and accelerate protein folding.</text>
</comment>
<comment type="catalytic activity">
    <reaction evidence="1">
        <text>ATP + H2O + a folded polypeptide = ADP + phosphate + an unfolded polypeptide.</text>
        <dbReference type="EC" id="5.6.1.7"/>
    </reaction>
</comment>
<comment type="subunit">
    <text evidence="1">Forms a cylinder of 14 subunits composed of two heptameric rings stacked back-to-back. Interacts with the co-chaperonin GroES.</text>
</comment>
<comment type="subcellular location">
    <subcellularLocation>
        <location evidence="1">Cytoplasm</location>
    </subcellularLocation>
</comment>
<comment type="similarity">
    <text evidence="1">Belongs to the chaperonin (HSP60) family.</text>
</comment>
<name>CH60_ACIB3</name>
<protein>
    <recommendedName>
        <fullName evidence="1">Chaperonin GroEL</fullName>
        <ecNumber evidence="1">5.6.1.7</ecNumber>
    </recommendedName>
    <alternativeName>
        <fullName evidence="1">60 kDa chaperonin</fullName>
    </alternativeName>
    <alternativeName>
        <fullName evidence="1">Chaperonin-60</fullName>
        <shortName evidence="1">Cpn60</shortName>
    </alternativeName>
</protein>
<evidence type="ECO:0000255" key="1">
    <source>
        <dbReference type="HAMAP-Rule" id="MF_00600"/>
    </source>
</evidence>
<feature type="chain" id="PRO_1000129956" description="Chaperonin GroEL">
    <location>
        <begin position="1"/>
        <end position="544"/>
    </location>
</feature>
<feature type="binding site" evidence="1">
    <location>
        <begin position="30"/>
        <end position="33"/>
    </location>
    <ligand>
        <name>ATP</name>
        <dbReference type="ChEBI" id="CHEBI:30616"/>
    </ligand>
</feature>
<feature type="binding site" evidence="1">
    <location>
        <position position="51"/>
    </location>
    <ligand>
        <name>ATP</name>
        <dbReference type="ChEBI" id="CHEBI:30616"/>
    </ligand>
</feature>
<feature type="binding site" evidence="1">
    <location>
        <begin position="87"/>
        <end position="91"/>
    </location>
    <ligand>
        <name>ATP</name>
        <dbReference type="ChEBI" id="CHEBI:30616"/>
    </ligand>
</feature>
<feature type="binding site" evidence="1">
    <location>
        <position position="415"/>
    </location>
    <ligand>
        <name>ATP</name>
        <dbReference type="ChEBI" id="CHEBI:30616"/>
    </ligand>
</feature>
<feature type="binding site" evidence="1">
    <location>
        <begin position="479"/>
        <end position="481"/>
    </location>
    <ligand>
        <name>ATP</name>
        <dbReference type="ChEBI" id="CHEBI:30616"/>
    </ligand>
</feature>
<feature type="binding site" evidence="1">
    <location>
        <position position="495"/>
    </location>
    <ligand>
        <name>ATP</name>
        <dbReference type="ChEBI" id="CHEBI:30616"/>
    </ligand>
</feature>
<dbReference type="EC" id="5.6.1.7" evidence="1"/>
<dbReference type="EMBL" id="CP001172">
    <property type="protein sequence ID" value="ACJ57160.1"/>
    <property type="molecule type" value="Genomic_DNA"/>
</dbReference>
<dbReference type="RefSeq" id="WP_001274623.1">
    <property type="nucleotide sequence ID" value="NZ_CP001172.1"/>
</dbReference>
<dbReference type="SMR" id="B7GY36"/>
<dbReference type="GeneID" id="92894939"/>
<dbReference type="HOGENOM" id="CLU_016503_3_0_6"/>
<dbReference type="Proteomes" id="UP000006924">
    <property type="component" value="Chromosome"/>
</dbReference>
<dbReference type="GO" id="GO:0005737">
    <property type="term" value="C:cytoplasm"/>
    <property type="evidence" value="ECO:0007669"/>
    <property type="project" value="UniProtKB-SubCell"/>
</dbReference>
<dbReference type="GO" id="GO:0005524">
    <property type="term" value="F:ATP binding"/>
    <property type="evidence" value="ECO:0007669"/>
    <property type="project" value="UniProtKB-UniRule"/>
</dbReference>
<dbReference type="GO" id="GO:0140662">
    <property type="term" value="F:ATP-dependent protein folding chaperone"/>
    <property type="evidence" value="ECO:0007669"/>
    <property type="project" value="InterPro"/>
</dbReference>
<dbReference type="GO" id="GO:0016853">
    <property type="term" value="F:isomerase activity"/>
    <property type="evidence" value="ECO:0007669"/>
    <property type="project" value="UniProtKB-KW"/>
</dbReference>
<dbReference type="GO" id="GO:0051082">
    <property type="term" value="F:unfolded protein binding"/>
    <property type="evidence" value="ECO:0007669"/>
    <property type="project" value="UniProtKB-UniRule"/>
</dbReference>
<dbReference type="GO" id="GO:0042026">
    <property type="term" value="P:protein refolding"/>
    <property type="evidence" value="ECO:0007669"/>
    <property type="project" value="UniProtKB-UniRule"/>
</dbReference>
<dbReference type="CDD" id="cd03344">
    <property type="entry name" value="GroEL"/>
    <property type="match status" value="1"/>
</dbReference>
<dbReference type="FunFam" id="1.10.560.10:FF:000001">
    <property type="entry name" value="60 kDa chaperonin"/>
    <property type="match status" value="1"/>
</dbReference>
<dbReference type="FunFam" id="3.50.7.10:FF:000001">
    <property type="entry name" value="60 kDa chaperonin"/>
    <property type="match status" value="1"/>
</dbReference>
<dbReference type="Gene3D" id="3.50.7.10">
    <property type="entry name" value="GroEL"/>
    <property type="match status" value="1"/>
</dbReference>
<dbReference type="Gene3D" id="1.10.560.10">
    <property type="entry name" value="GroEL-like equatorial domain"/>
    <property type="match status" value="1"/>
</dbReference>
<dbReference type="Gene3D" id="3.30.260.10">
    <property type="entry name" value="TCP-1-like chaperonin intermediate domain"/>
    <property type="match status" value="1"/>
</dbReference>
<dbReference type="HAMAP" id="MF_00600">
    <property type="entry name" value="CH60"/>
    <property type="match status" value="1"/>
</dbReference>
<dbReference type="InterPro" id="IPR018370">
    <property type="entry name" value="Chaperonin_Cpn60_CS"/>
</dbReference>
<dbReference type="InterPro" id="IPR001844">
    <property type="entry name" value="Cpn60/GroEL"/>
</dbReference>
<dbReference type="InterPro" id="IPR002423">
    <property type="entry name" value="Cpn60/GroEL/TCP-1"/>
</dbReference>
<dbReference type="InterPro" id="IPR027409">
    <property type="entry name" value="GroEL-like_apical_dom_sf"/>
</dbReference>
<dbReference type="InterPro" id="IPR027413">
    <property type="entry name" value="GROEL-like_equatorial_sf"/>
</dbReference>
<dbReference type="InterPro" id="IPR027410">
    <property type="entry name" value="TCP-1-like_intermed_sf"/>
</dbReference>
<dbReference type="NCBIfam" id="TIGR02348">
    <property type="entry name" value="GroEL"/>
    <property type="match status" value="1"/>
</dbReference>
<dbReference type="NCBIfam" id="NF000592">
    <property type="entry name" value="PRK00013.1"/>
    <property type="match status" value="1"/>
</dbReference>
<dbReference type="NCBIfam" id="NF009487">
    <property type="entry name" value="PRK12849.1"/>
    <property type="match status" value="1"/>
</dbReference>
<dbReference type="NCBIfam" id="NF009488">
    <property type="entry name" value="PRK12850.1"/>
    <property type="match status" value="1"/>
</dbReference>
<dbReference type="NCBIfam" id="NF009489">
    <property type="entry name" value="PRK12851.1"/>
    <property type="match status" value="1"/>
</dbReference>
<dbReference type="PANTHER" id="PTHR45633">
    <property type="entry name" value="60 KDA HEAT SHOCK PROTEIN, MITOCHONDRIAL"/>
    <property type="match status" value="1"/>
</dbReference>
<dbReference type="Pfam" id="PF00118">
    <property type="entry name" value="Cpn60_TCP1"/>
    <property type="match status" value="1"/>
</dbReference>
<dbReference type="PRINTS" id="PR00298">
    <property type="entry name" value="CHAPERONIN60"/>
</dbReference>
<dbReference type="SUPFAM" id="SSF52029">
    <property type="entry name" value="GroEL apical domain-like"/>
    <property type="match status" value="1"/>
</dbReference>
<dbReference type="SUPFAM" id="SSF48592">
    <property type="entry name" value="GroEL equatorial domain-like"/>
    <property type="match status" value="1"/>
</dbReference>
<dbReference type="SUPFAM" id="SSF54849">
    <property type="entry name" value="GroEL-intermediate domain like"/>
    <property type="match status" value="1"/>
</dbReference>
<dbReference type="PROSITE" id="PS00296">
    <property type="entry name" value="CHAPERONINS_CPN60"/>
    <property type="match status" value="1"/>
</dbReference>